<name>HXNT_EMENI</name>
<protein>
    <recommendedName>
        <fullName evidence="2">Flavin oxidoreductase hxnT</fullName>
        <ecNumber evidence="4">1.-.-.-</ecNumber>
    </recommendedName>
    <alternativeName>
        <fullName evidence="2">Nicotinate catabolism cluster protein hxnS</fullName>
    </alternativeName>
</protein>
<organism>
    <name type="scientific">Emericella nidulans (strain FGSC A4 / ATCC 38163 / CBS 112.46 / NRRL 194 / M139)</name>
    <name type="common">Aspergillus nidulans</name>
    <dbReference type="NCBI Taxonomy" id="227321"/>
    <lineage>
        <taxon>Eukaryota</taxon>
        <taxon>Fungi</taxon>
        <taxon>Dikarya</taxon>
        <taxon>Ascomycota</taxon>
        <taxon>Pezizomycotina</taxon>
        <taxon>Eurotiomycetes</taxon>
        <taxon>Eurotiomycetidae</taxon>
        <taxon>Eurotiales</taxon>
        <taxon>Aspergillaceae</taxon>
        <taxon>Aspergillus</taxon>
        <taxon>Aspergillus subgen. Nidulantes</taxon>
    </lineage>
</organism>
<keyword id="KW-0560">Oxidoreductase</keyword>
<keyword id="KW-1185">Reference proteome</keyword>
<evidence type="ECO:0000269" key="1">
    <source>
    </source>
</evidence>
<evidence type="ECO:0000303" key="2">
    <source>
    </source>
</evidence>
<evidence type="ECO:0000305" key="3"/>
<evidence type="ECO:0000305" key="4">
    <source>
    </source>
</evidence>
<feature type="chain" id="PRO_0000443340" description="Flavin oxidoreductase hxnT">
    <location>
        <begin position="1"/>
        <end position="388"/>
    </location>
</feature>
<reference key="1">
    <citation type="journal article" date="2005" name="Nature">
        <title>Sequencing of Aspergillus nidulans and comparative analysis with A. fumigatus and A. oryzae.</title>
        <authorList>
            <person name="Galagan J.E."/>
            <person name="Calvo S.E."/>
            <person name="Cuomo C."/>
            <person name="Ma L.-J."/>
            <person name="Wortman J.R."/>
            <person name="Batzoglou S."/>
            <person name="Lee S.-I."/>
            <person name="Bastuerkmen M."/>
            <person name="Spevak C.C."/>
            <person name="Clutterbuck J."/>
            <person name="Kapitonov V."/>
            <person name="Jurka J."/>
            <person name="Scazzocchio C."/>
            <person name="Farman M.L."/>
            <person name="Butler J."/>
            <person name="Purcell S."/>
            <person name="Harris S."/>
            <person name="Braus G.H."/>
            <person name="Draht O."/>
            <person name="Busch S."/>
            <person name="D'Enfert C."/>
            <person name="Bouchier C."/>
            <person name="Goldman G.H."/>
            <person name="Bell-Pedersen D."/>
            <person name="Griffiths-Jones S."/>
            <person name="Doonan J.H."/>
            <person name="Yu J."/>
            <person name="Vienken K."/>
            <person name="Pain A."/>
            <person name="Freitag M."/>
            <person name="Selker E.U."/>
            <person name="Archer D.B."/>
            <person name="Penalva M.A."/>
            <person name="Oakley B.R."/>
            <person name="Momany M."/>
            <person name="Tanaka T."/>
            <person name="Kumagai T."/>
            <person name="Asai K."/>
            <person name="Machida M."/>
            <person name="Nierman W.C."/>
            <person name="Denning D.W."/>
            <person name="Caddick M.X."/>
            <person name="Hynes M."/>
            <person name="Paoletti M."/>
            <person name="Fischer R."/>
            <person name="Miller B.L."/>
            <person name="Dyer P.S."/>
            <person name="Sachs M.S."/>
            <person name="Osmani S.A."/>
            <person name="Birren B.W."/>
        </authorList>
    </citation>
    <scope>NUCLEOTIDE SEQUENCE [LARGE SCALE GENOMIC DNA]</scope>
    <source>
        <strain>FGSC A4 / ATCC 38163 / CBS 112.46 / NRRL 194 / M139</strain>
    </source>
</reference>
<reference key="2">
    <citation type="journal article" date="2009" name="Fungal Genet. Biol.">
        <title>The 2008 update of the Aspergillus nidulans genome annotation: a community effort.</title>
        <authorList>
            <person name="Wortman J.R."/>
            <person name="Gilsenan J.M."/>
            <person name="Joardar V."/>
            <person name="Deegan J."/>
            <person name="Clutterbuck J."/>
            <person name="Andersen M.R."/>
            <person name="Archer D."/>
            <person name="Bencina M."/>
            <person name="Braus G."/>
            <person name="Coutinho P."/>
            <person name="von Dohren H."/>
            <person name="Doonan J."/>
            <person name="Driessen A.J."/>
            <person name="Durek P."/>
            <person name="Espeso E."/>
            <person name="Fekete E."/>
            <person name="Flipphi M."/>
            <person name="Estrada C.G."/>
            <person name="Geysens S."/>
            <person name="Goldman G."/>
            <person name="de Groot P.W."/>
            <person name="Hansen K."/>
            <person name="Harris S.D."/>
            <person name="Heinekamp T."/>
            <person name="Helmstaedt K."/>
            <person name="Henrissat B."/>
            <person name="Hofmann G."/>
            <person name="Homan T."/>
            <person name="Horio T."/>
            <person name="Horiuchi H."/>
            <person name="James S."/>
            <person name="Jones M."/>
            <person name="Karaffa L."/>
            <person name="Karanyi Z."/>
            <person name="Kato M."/>
            <person name="Keller N."/>
            <person name="Kelly D.E."/>
            <person name="Kiel J.A."/>
            <person name="Kim J.M."/>
            <person name="van der Klei I.J."/>
            <person name="Klis F.M."/>
            <person name="Kovalchuk A."/>
            <person name="Krasevec N."/>
            <person name="Kubicek C.P."/>
            <person name="Liu B."/>
            <person name="Maccabe A."/>
            <person name="Meyer V."/>
            <person name="Mirabito P."/>
            <person name="Miskei M."/>
            <person name="Mos M."/>
            <person name="Mullins J."/>
            <person name="Nelson D.R."/>
            <person name="Nielsen J."/>
            <person name="Oakley B.R."/>
            <person name="Osmani S.A."/>
            <person name="Pakula T."/>
            <person name="Paszewski A."/>
            <person name="Paulsen I."/>
            <person name="Pilsyk S."/>
            <person name="Pocsi I."/>
            <person name="Punt P.J."/>
            <person name="Ram A.F."/>
            <person name="Ren Q."/>
            <person name="Robellet X."/>
            <person name="Robson G."/>
            <person name="Seiboth B."/>
            <person name="van Solingen P."/>
            <person name="Specht T."/>
            <person name="Sun J."/>
            <person name="Taheri-Talesh N."/>
            <person name="Takeshita N."/>
            <person name="Ussery D."/>
            <person name="vanKuyk P.A."/>
            <person name="Visser H."/>
            <person name="van de Vondervoort P.J."/>
            <person name="de Vries R.P."/>
            <person name="Walton J."/>
            <person name="Xiang X."/>
            <person name="Xiong Y."/>
            <person name="Zeng A.P."/>
            <person name="Brandt B.W."/>
            <person name="Cornell M.J."/>
            <person name="van den Hondel C.A."/>
            <person name="Visser J."/>
            <person name="Oliver S.G."/>
            <person name="Turner G."/>
        </authorList>
    </citation>
    <scope>GENOME REANNOTATION</scope>
    <source>
        <strain>FGSC A4 / ATCC 38163 / CBS 112.46 / NRRL 194 / M139</strain>
    </source>
</reference>
<reference key="3">
    <citation type="journal article" date="2017" name="Open Biol.">
        <title>A eukaryotic nicotinate-inducible gene cluster: convergent evolution in fungi and bacteria.</title>
        <authorList>
            <person name="Amon J."/>
            <person name="Fernandez-Martin R."/>
            <person name="Bokor E."/>
            <person name="Cultrone A."/>
            <person name="Kelly J.M."/>
            <person name="Flipphi M."/>
            <person name="Scazzocchio C."/>
            <person name="Hamari Z."/>
        </authorList>
    </citation>
    <scope>IDENTIFICATION</scope>
    <scope>INDUCTION</scope>
    <scope>FUNCTION</scope>
    <scope>COFACTOR</scope>
</reference>
<proteinExistence type="evidence at transcript level"/>
<comment type="function">
    <text evidence="1">Flavin oxidoreductase, part of the hnx cluster involved in the purine degradation (PubMed:29212709). The nicotinate hydroxylase hnxS accepts nicotinate as a substrate and catalyzes the first step of nicotinate catabolism (PubMed:29212709). The major facilitator-type transporters hxnP and hxnZ are probably involved in the uptake of nicotinate-derived metabolites, and the oxidoreductases hxnT and hxnY in the further metabolism of 6-OH nicotinic acid (PubMed:29212709).</text>
</comment>
<comment type="cofactor">
    <cofactor evidence="4">
        <name>FMN</name>
        <dbReference type="ChEBI" id="CHEBI:58210"/>
    </cofactor>
</comment>
<comment type="induction">
    <text evidence="1">Expression is induced by nicotinate and 6-OH nicotinate, subject to nitrogen metabolite repression mediated by the GATA factor areA, and strictly regulated by the cluster-specific transcription regulator hnxR (PubMed:29212709).</text>
</comment>
<comment type="similarity">
    <text evidence="3">Belongs to the NADH:flavin oxidoreductase/NADH oxidase family.</text>
</comment>
<gene>
    <name evidence="2" type="primary">hxnT</name>
    <name type="ORF">ANIA_9177</name>
</gene>
<dbReference type="EC" id="1.-.-.-" evidence="4"/>
<dbReference type="EMBL" id="AACD01000170">
    <property type="protein sequence ID" value="EAA61468.1"/>
    <property type="molecule type" value="Genomic_DNA"/>
</dbReference>
<dbReference type="EMBL" id="BN001306">
    <property type="protein sequence ID" value="CBF82381.1"/>
    <property type="molecule type" value="Genomic_DNA"/>
</dbReference>
<dbReference type="RefSeq" id="XP_682446.1">
    <property type="nucleotide sequence ID" value="XM_677354.1"/>
</dbReference>
<dbReference type="SMR" id="A0A1U8QTA2"/>
<dbReference type="STRING" id="227321.A0A1U8QTA2"/>
<dbReference type="EnsemblFungi" id="CBF82381">
    <property type="protein sequence ID" value="CBF82381"/>
    <property type="gene ID" value="ANIA_09177"/>
</dbReference>
<dbReference type="KEGG" id="ani:ANIA_09177"/>
<dbReference type="VEuPathDB" id="FungiDB:AN9177"/>
<dbReference type="eggNOG" id="KOG0134">
    <property type="taxonomic scope" value="Eukaryota"/>
</dbReference>
<dbReference type="InParanoid" id="A0A1U8QTA2"/>
<dbReference type="OMA" id="APCTRMR"/>
<dbReference type="OrthoDB" id="276546at2759"/>
<dbReference type="Proteomes" id="UP000000560">
    <property type="component" value="Chromosome VI"/>
</dbReference>
<dbReference type="GO" id="GO:0010181">
    <property type="term" value="F:FMN binding"/>
    <property type="evidence" value="ECO:0007669"/>
    <property type="project" value="InterPro"/>
</dbReference>
<dbReference type="GO" id="GO:0003959">
    <property type="term" value="F:NADPH dehydrogenase activity"/>
    <property type="evidence" value="ECO:0000318"/>
    <property type="project" value="GO_Central"/>
</dbReference>
<dbReference type="CDD" id="cd02933">
    <property type="entry name" value="OYE_like_FMN"/>
    <property type="match status" value="1"/>
</dbReference>
<dbReference type="FunFam" id="3.20.20.70:FF:000059">
    <property type="entry name" value="N-ethylmaleimide reductase, FMN-linked"/>
    <property type="match status" value="1"/>
</dbReference>
<dbReference type="Gene3D" id="3.20.20.70">
    <property type="entry name" value="Aldolase class I"/>
    <property type="match status" value="1"/>
</dbReference>
<dbReference type="InterPro" id="IPR013785">
    <property type="entry name" value="Aldolase_TIM"/>
</dbReference>
<dbReference type="InterPro" id="IPR001155">
    <property type="entry name" value="OxRdtase_FMN_N"/>
</dbReference>
<dbReference type="InterPro" id="IPR045247">
    <property type="entry name" value="Oye-like"/>
</dbReference>
<dbReference type="PANTHER" id="PTHR22893:SF129">
    <property type="entry name" value="FLAVIN OXIDOREDUCTASE HXNT"/>
    <property type="match status" value="1"/>
</dbReference>
<dbReference type="PANTHER" id="PTHR22893">
    <property type="entry name" value="NADH OXIDOREDUCTASE-RELATED"/>
    <property type="match status" value="1"/>
</dbReference>
<dbReference type="Pfam" id="PF00724">
    <property type="entry name" value="Oxidored_FMN"/>
    <property type="match status" value="1"/>
</dbReference>
<dbReference type="SUPFAM" id="SSF51395">
    <property type="entry name" value="FMN-linked oxidoreductases"/>
    <property type="match status" value="1"/>
</dbReference>
<accession>A0A1U8QTA2</accession>
<accession>C8VJV9</accession>
<accession>Q5ARA3</accession>
<sequence length="388" mass="42404">MGSLSPLEPLFTPLRIGAFALQHRVVQAPCTRMRSTKESDGIWVPNDLNVEYYAQRASKGGLMLSEATPISRDAAGYPGVPGIFTPSQIEGWRKVTNAVHTKGGLILCQLWHVGRATTPGFLGGKTPLAPSDIPISGKALDGNVYADAPPRPMTVDEIKEVVLEYAAASKRAIEAGFDGVEIHGGNGYLLDQFLHDNVNNRTDAYGGSIENRSRIVLEIISAVTEAIGAERVGIRLSPYNYFQDTRDSNPQKHWGYLCTQIASLPESSRPAYVHMIEPRFDEILDESEKISALETMQEVVKPSLDGLRSSLKKGGVSFIAAGNFKPENAGEKLITDSADAIAFGRLFISNPDLPRRLKEGIELTKYDRSTFYGATPPEKGYTDYPFAQ</sequence>